<accession>Q8H859</accession>
<accession>H2KX87</accession>
<accession>Q109Z0</accession>
<proteinExistence type="evidence at transcript level"/>
<comment type="function">
    <text evidence="2">Involved in lignin biosynthesis. Catalyzes the final step specific for the production of lignin monomers. Catalyzes the NADPH-dependent reduction of coniferaldehyde, 5-hydroxyconiferaldehyde, sinapaldehyde, 4-coumaraldehyde and caffeyl aldehyde to their respective alcohols.</text>
</comment>
<comment type="catalytic activity">
    <reaction evidence="1">
        <text>(E)-cinnamyl alcohol + NADP(+) = (E)-cinnamaldehyde + NADPH + H(+)</text>
        <dbReference type="Rhea" id="RHEA:10392"/>
        <dbReference type="ChEBI" id="CHEBI:15378"/>
        <dbReference type="ChEBI" id="CHEBI:16731"/>
        <dbReference type="ChEBI" id="CHEBI:33227"/>
        <dbReference type="ChEBI" id="CHEBI:57783"/>
        <dbReference type="ChEBI" id="CHEBI:58349"/>
        <dbReference type="EC" id="1.1.1.195"/>
    </reaction>
    <physiologicalReaction direction="right-to-left" evidence="1">
        <dbReference type="Rhea" id="RHEA:10394"/>
    </physiologicalReaction>
</comment>
<comment type="catalytic activity">
    <reaction evidence="1">
        <text>(E)-coniferol + NADP(+) = (E)-coniferaldehyde + NADPH + H(+)</text>
        <dbReference type="Rhea" id="RHEA:22444"/>
        <dbReference type="ChEBI" id="CHEBI:15378"/>
        <dbReference type="ChEBI" id="CHEBI:16547"/>
        <dbReference type="ChEBI" id="CHEBI:17745"/>
        <dbReference type="ChEBI" id="CHEBI:57783"/>
        <dbReference type="ChEBI" id="CHEBI:58349"/>
        <dbReference type="EC" id="1.1.1.195"/>
    </reaction>
    <physiologicalReaction direction="right-to-left" evidence="1">
        <dbReference type="Rhea" id="RHEA:22446"/>
    </physiologicalReaction>
</comment>
<comment type="catalytic activity">
    <reaction evidence="1">
        <text>(E)-sinapyl alcohol + NADP(+) = (E)-sinapaldehyde + NADPH + H(+)</text>
        <dbReference type="Rhea" id="RHEA:45704"/>
        <dbReference type="ChEBI" id="CHEBI:15378"/>
        <dbReference type="ChEBI" id="CHEBI:27949"/>
        <dbReference type="ChEBI" id="CHEBI:57783"/>
        <dbReference type="ChEBI" id="CHEBI:58349"/>
        <dbReference type="ChEBI" id="CHEBI:64557"/>
        <dbReference type="EC" id="1.1.1.195"/>
    </reaction>
    <physiologicalReaction direction="right-to-left" evidence="1">
        <dbReference type="Rhea" id="RHEA:45706"/>
    </physiologicalReaction>
</comment>
<comment type="catalytic activity">
    <reaction evidence="1">
        <text>(E)-4-coumaroyl alcohol + NADP(+) = (E)-4-coumaraldehyde + NADPH + H(+)</text>
        <dbReference type="Rhea" id="RHEA:45724"/>
        <dbReference type="ChEBI" id="CHEBI:15378"/>
        <dbReference type="ChEBI" id="CHEBI:28353"/>
        <dbReference type="ChEBI" id="CHEBI:57783"/>
        <dbReference type="ChEBI" id="CHEBI:58349"/>
        <dbReference type="ChEBI" id="CHEBI:64555"/>
        <dbReference type="EC" id="1.1.1.195"/>
    </reaction>
    <physiologicalReaction direction="right-to-left" evidence="1">
        <dbReference type="Rhea" id="RHEA:45726"/>
    </physiologicalReaction>
</comment>
<comment type="catalytic activity">
    <reaction evidence="1">
        <text>(E)-caffeyl alcohol + NADP(+) = (E)-caffeyl aldehyde + NADPH + H(+)</text>
        <dbReference type="Rhea" id="RHEA:45728"/>
        <dbReference type="ChEBI" id="CHEBI:15378"/>
        <dbReference type="ChEBI" id="CHEBI:28323"/>
        <dbReference type="ChEBI" id="CHEBI:31334"/>
        <dbReference type="ChEBI" id="CHEBI:57783"/>
        <dbReference type="ChEBI" id="CHEBI:58349"/>
    </reaction>
    <physiologicalReaction direction="right-to-left" evidence="1">
        <dbReference type="Rhea" id="RHEA:45730"/>
    </physiologicalReaction>
</comment>
<comment type="cofactor">
    <cofactor evidence="1">
        <name>Zn(2+)</name>
        <dbReference type="ChEBI" id="CHEBI:29105"/>
    </cofactor>
    <text evidence="1">Binds 2 Zn(2+) ions per subunit.</text>
</comment>
<comment type="pathway">
    <text evidence="1">Aromatic compound metabolism; phenylpropanoid biosynthesis.</text>
</comment>
<comment type="subunit">
    <text evidence="1">Homodimer.</text>
</comment>
<comment type="similarity">
    <text evidence="4">Belongs to the zinc-containing alcohol dehydrogenase family.</text>
</comment>
<comment type="sequence caution" evidence="4">
    <conflict type="erroneous gene model prediction">
        <sequence resource="EMBL-CDS" id="ABG65973"/>
    </conflict>
</comment>
<comment type="sequence caution" evidence="4">
    <conflict type="erroneous initiation">
        <sequence resource="EMBL-CDS" id="BAF26197"/>
    </conflict>
    <text>Extended N-terminus.</text>
</comment>
<protein>
    <recommendedName>
        <fullName evidence="4">Probable cinnamyl alcohol dehydrogenase 1</fullName>
        <shortName evidence="3">OsCAD1</shortName>
        <ecNumber evidence="1">1.1.1.195</ecNumber>
    </recommendedName>
</protein>
<organism>
    <name type="scientific">Oryza sativa subsp. japonica</name>
    <name type="common">Rice</name>
    <dbReference type="NCBI Taxonomy" id="39947"/>
    <lineage>
        <taxon>Eukaryota</taxon>
        <taxon>Viridiplantae</taxon>
        <taxon>Streptophyta</taxon>
        <taxon>Embryophyta</taxon>
        <taxon>Tracheophyta</taxon>
        <taxon>Spermatophyta</taxon>
        <taxon>Magnoliopsida</taxon>
        <taxon>Liliopsida</taxon>
        <taxon>Poales</taxon>
        <taxon>Poaceae</taxon>
        <taxon>BOP clade</taxon>
        <taxon>Oryzoideae</taxon>
        <taxon>Oryzeae</taxon>
        <taxon>Oryzinae</taxon>
        <taxon>Oryza</taxon>
        <taxon>Oryza sativa</taxon>
    </lineage>
</organism>
<gene>
    <name evidence="3" type="primary">CAD1</name>
    <name type="ordered locus">Os10g0194200</name>
    <name type="ordered locus">LOC_Os10g11810</name>
    <name type="ORF">OsJ_30963</name>
    <name type="ORF">OSJNBb0005F01.4</name>
</gene>
<feature type="chain" id="PRO_0000382640" description="Probable cinnamyl alcohol dehydrogenase 1">
    <location>
        <begin position="1"/>
        <end position="354"/>
    </location>
</feature>
<feature type="binding site" evidence="1">
    <location>
        <position position="47"/>
    </location>
    <ligand>
        <name>Zn(2+)</name>
        <dbReference type="ChEBI" id="CHEBI:29105"/>
        <label>1</label>
        <note>catalytic</note>
    </ligand>
</feature>
<feature type="binding site" evidence="1">
    <location>
        <position position="69"/>
    </location>
    <ligand>
        <name>Zn(2+)</name>
        <dbReference type="ChEBI" id="CHEBI:29105"/>
        <label>1</label>
        <note>catalytic</note>
    </ligand>
</feature>
<feature type="binding site" evidence="1">
    <location>
        <position position="70"/>
    </location>
    <ligand>
        <name>Zn(2+)</name>
        <dbReference type="ChEBI" id="CHEBI:29105"/>
        <label>1</label>
        <note>catalytic</note>
    </ligand>
</feature>
<feature type="binding site" evidence="1">
    <location>
        <position position="100"/>
    </location>
    <ligand>
        <name>Zn(2+)</name>
        <dbReference type="ChEBI" id="CHEBI:29105"/>
        <label>2</label>
    </ligand>
</feature>
<feature type="binding site" evidence="1">
    <location>
        <position position="103"/>
    </location>
    <ligand>
        <name>Zn(2+)</name>
        <dbReference type="ChEBI" id="CHEBI:29105"/>
        <label>2</label>
    </ligand>
</feature>
<feature type="binding site" evidence="1">
    <location>
        <position position="106"/>
    </location>
    <ligand>
        <name>Zn(2+)</name>
        <dbReference type="ChEBI" id="CHEBI:29105"/>
        <label>2</label>
    </ligand>
</feature>
<feature type="binding site" evidence="1">
    <location>
        <position position="114"/>
    </location>
    <ligand>
        <name>Zn(2+)</name>
        <dbReference type="ChEBI" id="CHEBI:29105"/>
        <label>2</label>
    </ligand>
</feature>
<feature type="binding site" evidence="1">
    <location>
        <position position="163"/>
    </location>
    <ligand>
        <name>Zn(2+)</name>
        <dbReference type="ChEBI" id="CHEBI:29105"/>
        <label>1</label>
        <note>catalytic</note>
    </ligand>
</feature>
<feature type="binding site" evidence="1">
    <location>
        <position position="167"/>
    </location>
    <ligand>
        <name>NADP(+)</name>
        <dbReference type="ChEBI" id="CHEBI:58349"/>
    </ligand>
</feature>
<feature type="binding site" evidence="1">
    <location>
        <begin position="188"/>
        <end position="193"/>
    </location>
    <ligand>
        <name>NADP(+)</name>
        <dbReference type="ChEBI" id="CHEBI:58349"/>
    </ligand>
</feature>
<feature type="binding site" evidence="1">
    <location>
        <begin position="211"/>
        <end position="216"/>
    </location>
    <ligand>
        <name>NADP(+)</name>
        <dbReference type="ChEBI" id="CHEBI:58349"/>
    </ligand>
</feature>
<feature type="binding site" evidence="1">
    <location>
        <position position="251"/>
    </location>
    <ligand>
        <name>NADP(+)</name>
        <dbReference type="ChEBI" id="CHEBI:58349"/>
    </ligand>
</feature>
<feature type="binding site" evidence="1">
    <location>
        <begin position="297"/>
        <end position="299"/>
    </location>
    <ligand>
        <name>NADP(+)</name>
        <dbReference type="ChEBI" id="CHEBI:58349"/>
    </ligand>
</feature>
<feature type="sequence conflict" description="In Ref. 6; AK068221." evidence="4" ref="6">
    <original>P</original>
    <variation>A</variation>
    <location>
        <position position="67"/>
    </location>
</feature>
<name>CADH1_ORYSJ</name>
<dbReference type="EC" id="1.1.1.195" evidence="1"/>
<dbReference type="EMBL" id="AC104322">
    <property type="protein sequence ID" value="AAN09864.1"/>
    <property type="molecule type" value="Genomic_DNA"/>
</dbReference>
<dbReference type="EMBL" id="DP000086">
    <property type="protein sequence ID" value="AAP52597.1"/>
    <property type="molecule type" value="Genomic_DNA"/>
</dbReference>
<dbReference type="EMBL" id="DP000086">
    <property type="protein sequence ID" value="ABB46995.2"/>
    <property type="molecule type" value="Genomic_DNA"/>
</dbReference>
<dbReference type="EMBL" id="DP000086">
    <property type="protein sequence ID" value="ABG65973.1"/>
    <property type="status" value="ALT_SEQ"/>
    <property type="molecule type" value="Genomic_DNA"/>
</dbReference>
<dbReference type="EMBL" id="AP008216">
    <property type="protein sequence ID" value="BAF26197.2"/>
    <property type="status" value="ALT_INIT"/>
    <property type="molecule type" value="Genomic_DNA"/>
</dbReference>
<dbReference type="EMBL" id="AP014966">
    <property type="protein sequence ID" value="BAT10202.1"/>
    <property type="molecule type" value="Genomic_DNA"/>
</dbReference>
<dbReference type="EMBL" id="CM000147">
    <property type="protein sequence ID" value="EAZ15554.1"/>
    <property type="molecule type" value="Genomic_DNA"/>
</dbReference>
<dbReference type="EMBL" id="AK068221">
    <property type="status" value="NOT_ANNOTATED_CDS"/>
    <property type="molecule type" value="mRNA"/>
</dbReference>
<dbReference type="RefSeq" id="XP_015612798.1">
    <property type="nucleotide sequence ID" value="XM_015757312.1"/>
</dbReference>
<dbReference type="RefSeq" id="XP_015612799.1">
    <property type="nucleotide sequence ID" value="XM_015757313.1"/>
</dbReference>
<dbReference type="SMR" id="Q8H859"/>
<dbReference type="FunCoup" id="Q8H859">
    <property type="interactions" value="300"/>
</dbReference>
<dbReference type="STRING" id="39947.Q8H859"/>
<dbReference type="PaxDb" id="39947-Q8H859"/>
<dbReference type="EnsemblPlants" id="Os10t0194200-01">
    <property type="protein sequence ID" value="Os10t0194200-01"/>
    <property type="gene ID" value="Os10g0194200"/>
</dbReference>
<dbReference type="GeneID" id="4348242"/>
<dbReference type="Gramene" id="Os10t0194200-01">
    <property type="protein sequence ID" value="Os10t0194200-01"/>
    <property type="gene ID" value="Os10g0194200"/>
</dbReference>
<dbReference type="KEGG" id="dosa:Os10g0194200"/>
<dbReference type="KEGG" id="osa:4348242"/>
<dbReference type="eggNOG" id="KOG0023">
    <property type="taxonomic scope" value="Eukaryota"/>
</dbReference>
<dbReference type="HOGENOM" id="CLU_026673_20_2_1"/>
<dbReference type="InParanoid" id="Q8H859"/>
<dbReference type="OMA" id="GWGEQKF"/>
<dbReference type="OrthoDB" id="1879366at2759"/>
<dbReference type="UniPathway" id="UPA00711"/>
<dbReference type="Proteomes" id="UP000000763">
    <property type="component" value="Chromosome 10"/>
</dbReference>
<dbReference type="Proteomes" id="UP000007752">
    <property type="component" value="Chromosome 10"/>
</dbReference>
<dbReference type="Proteomes" id="UP000059680">
    <property type="component" value="Chromosome 10"/>
</dbReference>
<dbReference type="GO" id="GO:0045551">
    <property type="term" value="F:cinnamyl-alcohol dehydrogenase activity"/>
    <property type="evidence" value="ECO:0007669"/>
    <property type="project" value="UniProtKB-EC"/>
</dbReference>
<dbReference type="GO" id="GO:0050268">
    <property type="term" value="F:coniferyl-alcohol dehydrogenase activity"/>
    <property type="evidence" value="ECO:0007669"/>
    <property type="project" value="RHEA"/>
</dbReference>
<dbReference type="GO" id="GO:0016616">
    <property type="term" value="F:oxidoreductase activity, acting on the CH-OH group of donors, NAD or NADP as acceptor"/>
    <property type="evidence" value="ECO:0000318"/>
    <property type="project" value="GO_Central"/>
</dbReference>
<dbReference type="GO" id="GO:0008270">
    <property type="term" value="F:zinc ion binding"/>
    <property type="evidence" value="ECO:0007669"/>
    <property type="project" value="InterPro"/>
</dbReference>
<dbReference type="GO" id="GO:0009809">
    <property type="term" value="P:lignin biosynthetic process"/>
    <property type="evidence" value="ECO:0007669"/>
    <property type="project" value="UniProtKB-KW"/>
</dbReference>
<dbReference type="CDD" id="cd05283">
    <property type="entry name" value="CAD1"/>
    <property type="match status" value="1"/>
</dbReference>
<dbReference type="FunFam" id="3.40.50.720:FF:000022">
    <property type="entry name" value="Cinnamyl alcohol dehydrogenase"/>
    <property type="match status" value="1"/>
</dbReference>
<dbReference type="FunFam" id="3.90.180.10:FF:000004">
    <property type="entry name" value="probable cinnamyl alcohol dehydrogenase"/>
    <property type="match status" value="1"/>
</dbReference>
<dbReference type="Gene3D" id="3.90.180.10">
    <property type="entry name" value="Medium-chain alcohol dehydrogenases, catalytic domain"/>
    <property type="match status" value="1"/>
</dbReference>
<dbReference type="Gene3D" id="3.40.50.720">
    <property type="entry name" value="NAD(P)-binding Rossmann-like Domain"/>
    <property type="match status" value="1"/>
</dbReference>
<dbReference type="InterPro" id="IPR013149">
    <property type="entry name" value="ADH-like_C"/>
</dbReference>
<dbReference type="InterPro" id="IPR013154">
    <property type="entry name" value="ADH-like_N"/>
</dbReference>
<dbReference type="InterPro" id="IPR002328">
    <property type="entry name" value="ADH_Zn_CS"/>
</dbReference>
<dbReference type="InterPro" id="IPR047109">
    <property type="entry name" value="CAD-like"/>
</dbReference>
<dbReference type="InterPro" id="IPR011032">
    <property type="entry name" value="GroES-like_sf"/>
</dbReference>
<dbReference type="InterPro" id="IPR036291">
    <property type="entry name" value="NAD(P)-bd_dom_sf"/>
</dbReference>
<dbReference type="InterPro" id="IPR020843">
    <property type="entry name" value="PKS_ER"/>
</dbReference>
<dbReference type="PANTHER" id="PTHR42683">
    <property type="entry name" value="ALDEHYDE REDUCTASE"/>
    <property type="match status" value="1"/>
</dbReference>
<dbReference type="Pfam" id="PF08240">
    <property type="entry name" value="ADH_N"/>
    <property type="match status" value="1"/>
</dbReference>
<dbReference type="Pfam" id="PF00107">
    <property type="entry name" value="ADH_zinc_N"/>
    <property type="match status" value="1"/>
</dbReference>
<dbReference type="SMART" id="SM00829">
    <property type="entry name" value="PKS_ER"/>
    <property type="match status" value="1"/>
</dbReference>
<dbReference type="SUPFAM" id="SSF50129">
    <property type="entry name" value="GroES-like"/>
    <property type="match status" value="1"/>
</dbReference>
<dbReference type="SUPFAM" id="SSF51735">
    <property type="entry name" value="NAD(P)-binding Rossmann-fold domains"/>
    <property type="match status" value="1"/>
</dbReference>
<dbReference type="PROSITE" id="PS00059">
    <property type="entry name" value="ADH_ZINC"/>
    <property type="match status" value="1"/>
</dbReference>
<evidence type="ECO:0000250" key="1">
    <source>
        <dbReference type="UniProtKB" id="O49482"/>
    </source>
</evidence>
<evidence type="ECO:0000250" key="2">
    <source>
        <dbReference type="UniProtKB" id="Q9SJ25"/>
    </source>
</evidence>
<evidence type="ECO:0000303" key="3">
    <source>
    </source>
</evidence>
<evidence type="ECO:0000305" key="4"/>
<sequence length="354" mass="38512">MAAECGSGNCDAWAARDPSGILSPYKFNRRAVQSDDVSLRITHCGVCYADVAWTRNILNNSMYPLVPGHEIAGVVTEVGADVKSFKVGDHVGVGTYVNSCRDCENCNSSLENYCSQHVFTFNGVDTDGTVTKGGYSTHIVVHERYCFKIPDGYPLEKAAPLLCAGITVYSPMMRHNMNQPGKSLGVIGLGGLGHMAVKFGKAFGLKVTVISTSESKRKEAIDLLGADNFVVSSDENQMETLKSSLNFIIDTASGDHPFDPYLTLLKVGGVMALLSFPSEIKVHPANLNLGGRSLSGSVTGGTKDIQEMINFCAANKIYPDIEMIKIDYINEALQRLVDRDVRFRFVIDIENSFK</sequence>
<keyword id="KW-0438">Lignin biosynthesis</keyword>
<keyword id="KW-0479">Metal-binding</keyword>
<keyword id="KW-0521">NADP</keyword>
<keyword id="KW-0560">Oxidoreductase</keyword>
<keyword id="KW-1185">Reference proteome</keyword>
<keyword id="KW-0862">Zinc</keyword>
<reference key="1">
    <citation type="journal article" date="2003" name="Science">
        <title>In-depth view of structure, activity, and evolution of rice chromosome 10.</title>
        <authorList>
            <person name="Yu Y."/>
            <person name="Rambo T."/>
            <person name="Currie J."/>
            <person name="Saski C."/>
            <person name="Kim H.-R."/>
            <person name="Collura K."/>
            <person name="Thompson S."/>
            <person name="Simmons J."/>
            <person name="Yang T.-J."/>
            <person name="Nah G."/>
            <person name="Patel A.J."/>
            <person name="Thurmond S."/>
            <person name="Henry D."/>
            <person name="Oates R."/>
            <person name="Palmer M."/>
            <person name="Pries G."/>
            <person name="Gibson J."/>
            <person name="Anderson H."/>
            <person name="Paradkar M."/>
            <person name="Crane L."/>
            <person name="Dale J."/>
            <person name="Carver M.B."/>
            <person name="Wood T."/>
            <person name="Frisch D."/>
            <person name="Engler F."/>
            <person name="Soderlund C."/>
            <person name="Palmer L.E."/>
            <person name="Teytelman L."/>
            <person name="Nascimento L."/>
            <person name="De la Bastide M."/>
            <person name="Spiegel L."/>
            <person name="Ware D."/>
            <person name="O'Shaughnessy A."/>
            <person name="Dike S."/>
            <person name="Dedhia N."/>
            <person name="Preston R."/>
            <person name="Huang E."/>
            <person name="Ferraro K."/>
            <person name="Kuit K."/>
            <person name="Miller B."/>
            <person name="Zutavern T."/>
            <person name="Katzenberger F."/>
            <person name="Muller S."/>
            <person name="Balija V."/>
            <person name="Martienssen R.A."/>
            <person name="Stein L."/>
            <person name="Minx P."/>
            <person name="Johnson D."/>
            <person name="Cordum H."/>
            <person name="Mardis E."/>
            <person name="Cheng Z."/>
            <person name="Jiang J."/>
            <person name="Wilson R."/>
            <person name="McCombie W.R."/>
            <person name="Wing R.A."/>
            <person name="Yuan Q."/>
            <person name="Ouyang S."/>
            <person name="Liu J."/>
            <person name="Jones K.M."/>
            <person name="Gansberger K."/>
            <person name="Moffat K."/>
            <person name="Hill J."/>
            <person name="Tsitrin T."/>
            <person name="Overton L."/>
            <person name="Bera J."/>
            <person name="Kim M."/>
            <person name="Jin S."/>
            <person name="Tallon L."/>
            <person name="Ciecko A."/>
            <person name="Pai G."/>
            <person name="Van Aken S."/>
            <person name="Utterback T."/>
            <person name="Reidmuller S."/>
            <person name="Bormann J."/>
            <person name="Feldblyum T."/>
            <person name="Hsiao J."/>
            <person name="Zismann V."/>
            <person name="Blunt S."/>
            <person name="de Vazeille A.R."/>
            <person name="Shaffer T."/>
            <person name="Koo H."/>
            <person name="Suh B."/>
            <person name="Yang Q."/>
            <person name="Haas B."/>
            <person name="Peterson J."/>
            <person name="Pertea M."/>
            <person name="Volfovsky N."/>
            <person name="Wortman J."/>
            <person name="White O."/>
            <person name="Salzberg S.L."/>
            <person name="Fraser C.M."/>
            <person name="Buell C.R."/>
            <person name="Messing J."/>
            <person name="Song R."/>
            <person name="Fuks G."/>
            <person name="Llaca V."/>
            <person name="Kovchak S."/>
            <person name="Young S."/>
            <person name="Bowers J.E."/>
            <person name="Paterson A.H."/>
            <person name="Johns M.A."/>
            <person name="Mao L."/>
            <person name="Pan H."/>
            <person name="Dean R.A."/>
        </authorList>
    </citation>
    <scope>NUCLEOTIDE SEQUENCE [LARGE SCALE GENOMIC DNA]</scope>
    <source>
        <strain>cv. Nipponbare</strain>
    </source>
</reference>
<reference key="2">
    <citation type="journal article" date="2005" name="Nature">
        <title>The map-based sequence of the rice genome.</title>
        <authorList>
            <consortium name="International rice genome sequencing project (IRGSP)"/>
        </authorList>
    </citation>
    <scope>NUCLEOTIDE SEQUENCE [LARGE SCALE GENOMIC DNA]</scope>
    <source>
        <strain>cv. Nipponbare</strain>
    </source>
</reference>
<reference key="3">
    <citation type="journal article" date="2008" name="Nucleic Acids Res.">
        <title>The rice annotation project database (RAP-DB): 2008 update.</title>
        <authorList>
            <consortium name="The rice annotation project (RAP)"/>
        </authorList>
    </citation>
    <scope>GENOME REANNOTATION</scope>
    <source>
        <strain>cv. Nipponbare</strain>
    </source>
</reference>
<reference key="4">
    <citation type="journal article" date="2013" name="Rice">
        <title>Improvement of the Oryza sativa Nipponbare reference genome using next generation sequence and optical map data.</title>
        <authorList>
            <person name="Kawahara Y."/>
            <person name="de la Bastide M."/>
            <person name="Hamilton J.P."/>
            <person name="Kanamori H."/>
            <person name="McCombie W.R."/>
            <person name="Ouyang S."/>
            <person name="Schwartz D.C."/>
            <person name="Tanaka T."/>
            <person name="Wu J."/>
            <person name="Zhou S."/>
            <person name="Childs K.L."/>
            <person name="Davidson R.M."/>
            <person name="Lin H."/>
            <person name="Quesada-Ocampo L."/>
            <person name="Vaillancourt B."/>
            <person name="Sakai H."/>
            <person name="Lee S.S."/>
            <person name="Kim J."/>
            <person name="Numa H."/>
            <person name="Itoh T."/>
            <person name="Buell C.R."/>
            <person name="Matsumoto T."/>
        </authorList>
    </citation>
    <scope>GENOME REANNOTATION</scope>
    <source>
        <strain>cv. Nipponbare</strain>
    </source>
</reference>
<reference key="5">
    <citation type="journal article" date="2005" name="PLoS Biol.">
        <title>The genomes of Oryza sativa: a history of duplications.</title>
        <authorList>
            <person name="Yu J."/>
            <person name="Wang J."/>
            <person name="Lin W."/>
            <person name="Li S."/>
            <person name="Li H."/>
            <person name="Zhou J."/>
            <person name="Ni P."/>
            <person name="Dong W."/>
            <person name="Hu S."/>
            <person name="Zeng C."/>
            <person name="Zhang J."/>
            <person name="Zhang Y."/>
            <person name="Li R."/>
            <person name="Xu Z."/>
            <person name="Li S."/>
            <person name="Li X."/>
            <person name="Zheng H."/>
            <person name="Cong L."/>
            <person name="Lin L."/>
            <person name="Yin J."/>
            <person name="Geng J."/>
            <person name="Li G."/>
            <person name="Shi J."/>
            <person name="Liu J."/>
            <person name="Lv H."/>
            <person name="Li J."/>
            <person name="Wang J."/>
            <person name="Deng Y."/>
            <person name="Ran L."/>
            <person name="Shi X."/>
            <person name="Wang X."/>
            <person name="Wu Q."/>
            <person name="Li C."/>
            <person name="Ren X."/>
            <person name="Wang J."/>
            <person name="Wang X."/>
            <person name="Li D."/>
            <person name="Liu D."/>
            <person name="Zhang X."/>
            <person name="Ji Z."/>
            <person name="Zhao W."/>
            <person name="Sun Y."/>
            <person name="Zhang Z."/>
            <person name="Bao J."/>
            <person name="Han Y."/>
            <person name="Dong L."/>
            <person name="Ji J."/>
            <person name="Chen P."/>
            <person name="Wu S."/>
            <person name="Liu J."/>
            <person name="Xiao Y."/>
            <person name="Bu D."/>
            <person name="Tan J."/>
            <person name="Yang L."/>
            <person name="Ye C."/>
            <person name="Zhang J."/>
            <person name="Xu J."/>
            <person name="Zhou Y."/>
            <person name="Yu Y."/>
            <person name="Zhang B."/>
            <person name="Zhuang S."/>
            <person name="Wei H."/>
            <person name="Liu B."/>
            <person name="Lei M."/>
            <person name="Yu H."/>
            <person name="Li Y."/>
            <person name="Xu H."/>
            <person name="Wei S."/>
            <person name="He X."/>
            <person name="Fang L."/>
            <person name="Zhang Z."/>
            <person name="Zhang Y."/>
            <person name="Huang X."/>
            <person name="Su Z."/>
            <person name="Tong W."/>
            <person name="Li J."/>
            <person name="Tong Z."/>
            <person name="Li S."/>
            <person name="Ye J."/>
            <person name="Wang L."/>
            <person name="Fang L."/>
            <person name="Lei T."/>
            <person name="Chen C.-S."/>
            <person name="Chen H.-C."/>
            <person name="Xu Z."/>
            <person name="Li H."/>
            <person name="Huang H."/>
            <person name="Zhang F."/>
            <person name="Xu H."/>
            <person name="Li N."/>
            <person name="Zhao C."/>
            <person name="Li S."/>
            <person name="Dong L."/>
            <person name="Huang Y."/>
            <person name="Li L."/>
            <person name="Xi Y."/>
            <person name="Qi Q."/>
            <person name="Li W."/>
            <person name="Zhang B."/>
            <person name="Hu W."/>
            <person name="Zhang Y."/>
            <person name="Tian X."/>
            <person name="Jiao Y."/>
            <person name="Liang X."/>
            <person name="Jin J."/>
            <person name="Gao L."/>
            <person name="Zheng W."/>
            <person name="Hao B."/>
            <person name="Liu S.-M."/>
            <person name="Wang W."/>
            <person name="Yuan L."/>
            <person name="Cao M."/>
            <person name="McDermott J."/>
            <person name="Samudrala R."/>
            <person name="Wang J."/>
            <person name="Wong G.K.-S."/>
            <person name="Yang H."/>
        </authorList>
    </citation>
    <scope>NUCLEOTIDE SEQUENCE [LARGE SCALE GENOMIC DNA]</scope>
    <source>
        <strain>cv. Nipponbare</strain>
    </source>
</reference>
<reference key="6">
    <citation type="journal article" date="2003" name="Science">
        <title>Collection, mapping, and annotation of over 28,000 cDNA clones from japonica rice.</title>
        <authorList>
            <consortium name="The rice full-length cDNA consortium"/>
        </authorList>
    </citation>
    <scope>NUCLEOTIDE SEQUENCE [LARGE SCALE MRNA]</scope>
    <source>
        <strain>cv. Nipponbare</strain>
    </source>
</reference>
<reference key="7">
    <citation type="journal article" date="2005" name="Planta">
        <title>Structure of the cinnamyl-alcohol dehydrogenase gene family in rice and promoter activity of a member associated with lignification.</title>
        <authorList>
            <person name="Tobias C.M."/>
            <person name="Chow E.K."/>
        </authorList>
    </citation>
    <scope>GENE FAMILY</scope>
    <scope>NOMENCLATURE</scope>
</reference>